<keyword id="KW-0333">Golgi apparatus</keyword>
<keyword id="KW-0472">Membrane</keyword>
<keyword id="KW-1185">Reference proteome</keyword>
<keyword id="KW-0762">Sugar transport</keyword>
<keyword id="KW-0812">Transmembrane</keyword>
<keyword id="KW-1133">Transmembrane helix</keyword>
<keyword id="KW-0813">Transport</keyword>
<feature type="chain" id="PRO_0000337751" description="Probable UDP-sugar transporter protein SLC35A4">
    <location>
        <begin position="1"/>
        <end position="324"/>
    </location>
</feature>
<feature type="topological domain" description="Cytoplasmic" evidence="2">
    <location>
        <begin position="1"/>
        <end position="18"/>
    </location>
</feature>
<feature type="transmembrane region" description="Helical" evidence="3">
    <location>
        <begin position="19"/>
        <end position="39"/>
    </location>
</feature>
<feature type="topological domain" description="Lumenal" evidence="2">
    <location>
        <begin position="40"/>
        <end position="52"/>
    </location>
</feature>
<feature type="transmembrane region" description="Helical" evidence="3">
    <location>
        <begin position="53"/>
        <end position="73"/>
    </location>
</feature>
<feature type="topological domain" description="Cytoplasmic" evidence="2">
    <location>
        <begin position="74"/>
        <end position="85"/>
    </location>
</feature>
<feature type="transmembrane region" description="Helical" evidence="3">
    <location>
        <begin position="86"/>
        <end position="106"/>
    </location>
</feature>
<feature type="topological domain" description="Lumenal" evidence="2">
    <location>
        <begin position="107"/>
        <end position="142"/>
    </location>
</feature>
<feature type="transmembrane region" description="Helical" evidence="3">
    <location>
        <begin position="143"/>
        <end position="163"/>
    </location>
</feature>
<feature type="topological domain" description="Cytoplasmic" evidence="2">
    <location>
        <begin position="164"/>
        <end position="180"/>
    </location>
</feature>
<feature type="transmembrane region" description="Helical" evidence="3">
    <location>
        <begin position="181"/>
        <end position="201"/>
    </location>
</feature>
<feature type="topological domain" description="Lumenal" evidence="2">
    <location>
        <begin position="202"/>
        <end position="214"/>
    </location>
</feature>
<feature type="transmembrane region" description="Helical" evidence="3">
    <location>
        <begin position="215"/>
        <end position="235"/>
    </location>
</feature>
<feature type="topological domain" description="Cytoplasmic" evidence="2">
    <location>
        <begin position="236"/>
        <end position="250"/>
    </location>
</feature>
<feature type="transmembrane region" description="Helical" evidence="3">
    <location>
        <begin position="251"/>
        <end position="271"/>
    </location>
</feature>
<feature type="topological domain" description="Lumenal" evidence="2">
    <location>
        <begin position="272"/>
        <end position="275"/>
    </location>
</feature>
<feature type="transmembrane region" description="Helical" evidence="3">
    <location>
        <begin position="276"/>
        <end position="298"/>
    </location>
</feature>
<feature type="topological domain" description="Cytoplasmic" evidence="2">
    <location>
        <begin position="299"/>
        <end position="324"/>
    </location>
</feature>
<sequence>MSVEDGGMPGLSRPRQARWTLMLLLSTAMYGAHAPLLALCHVDGRVPFRPSSAVLLTELTKLLLCAFSLLVGWQAWPQGAPPWRQAAPFALSALLYGANNNLVIYLQRYMDPSTYQVLSNLKIGSTAVLYCLCLRHRLSVRQGLALLLLMAAGACYAAGGLQVPGNTLPRPPPAAAASPMPLHITPLGLLLLILYCLISGLSSVYTELLMKRQQLPLALQNLFLYTFGVLLNLGLHAGGGPGPGLLEGFSGWAALVVLSQALNGLLMSVVMKHGSSITRLFVVSCSLVVNAVLSAVLLRLQLTAAFFLATLLIGLAMRLYYGSR</sequence>
<proteinExistence type="evidence at transcript level"/>
<evidence type="ECO:0000250" key="1">
    <source>
        <dbReference type="UniProtKB" id="Q91ZR7"/>
    </source>
</evidence>
<evidence type="ECO:0000250" key="2">
    <source>
        <dbReference type="UniProtKB" id="Q96G79"/>
    </source>
</evidence>
<evidence type="ECO:0000255" key="3"/>
<evidence type="ECO:0000305" key="4"/>
<comment type="function">
    <text evidence="2">Mediates the transport of CDP-ribitol (By similarity). Does not exhibit CMP-sialic acid, UDP-galactose and UDP-N-acetylglucosamine transport activity (By similarity).</text>
</comment>
<comment type="catalytic activity">
    <reaction evidence="2">
        <text>CDP-L-ribitol(in) + CDP(out) = CDP-L-ribitol(out) + CDP(in)</text>
        <dbReference type="Rhea" id="RHEA:71579"/>
        <dbReference type="ChEBI" id="CHEBI:57608"/>
        <dbReference type="ChEBI" id="CHEBI:58069"/>
    </reaction>
</comment>
<comment type="subunit">
    <text evidence="2">Found in a complex with SLC35A2 and SLC35A3.</text>
</comment>
<comment type="subcellular location">
    <subcellularLocation>
        <location evidence="1">Golgi apparatus membrane</location>
        <topology evidence="3">Multi-pass membrane protein</topology>
    </subcellularLocation>
</comment>
<comment type="similarity">
    <text evidence="4">Belongs to the nucleotide-sugar transporter family. SLC35A subfamily.</text>
</comment>
<reference key="1">
    <citation type="submission" date="2004-11" db="EMBL/GenBank/DDBJ databases">
        <authorList>
            <consortium name="The German cDNA consortium"/>
        </authorList>
    </citation>
    <scope>NUCLEOTIDE SEQUENCE [LARGE SCALE MRNA]</scope>
    <source>
        <tissue>Kidney</tissue>
    </source>
</reference>
<name>S35A4_PONAB</name>
<dbReference type="EMBL" id="CR859140">
    <property type="protein sequence ID" value="CAH91331.1"/>
    <property type="molecule type" value="mRNA"/>
</dbReference>
<dbReference type="RefSeq" id="NP_001125786.1">
    <property type="nucleotide sequence ID" value="NM_001132314.2"/>
</dbReference>
<dbReference type="SMR" id="Q5RA79"/>
<dbReference type="FunCoup" id="Q5RA79">
    <property type="interactions" value="509"/>
</dbReference>
<dbReference type="STRING" id="9601.ENSPPYP00000017731"/>
<dbReference type="GeneID" id="100172714"/>
<dbReference type="KEGG" id="pon:100172714"/>
<dbReference type="CTD" id="113829"/>
<dbReference type="eggNOG" id="KOG2234">
    <property type="taxonomic scope" value="Eukaryota"/>
</dbReference>
<dbReference type="HOGENOM" id="CLU_024645_5_1_1"/>
<dbReference type="InParanoid" id="Q5RA79"/>
<dbReference type="OrthoDB" id="419167at2759"/>
<dbReference type="TreeFam" id="TF315345"/>
<dbReference type="Proteomes" id="UP000001595">
    <property type="component" value="Chromosome 5"/>
</dbReference>
<dbReference type="GO" id="GO:0005794">
    <property type="term" value="C:Golgi apparatus"/>
    <property type="evidence" value="ECO:0000250"/>
    <property type="project" value="UniProtKB"/>
</dbReference>
<dbReference type="GO" id="GO:0000139">
    <property type="term" value="C:Golgi membrane"/>
    <property type="evidence" value="ECO:0000250"/>
    <property type="project" value="UniProtKB"/>
</dbReference>
<dbReference type="GO" id="GO:0015165">
    <property type="term" value="F:pyrimidine nucleotide-sugar transmembrane transporter activity"/>
    <property type="evidence" value="ECO:0007669"/>
    <property type="project" value="InterPro"/>
</dbReference>
<dbReference type="InterPro" id="IPR007271">
    <property type="entry name" value="Nuc_sug_transpt"/>
</dbReference>
<dbReference type="PANTHER" id="PTHR10231">
    <property type="entry name" value="NUCLEOTIDE-SUGAR TRANSMEMBRANE TRANSPORTER"/>
    <property type="match status" value="1"/>
</dbReference>
<dbReference type="Pfam" id="PF04142">
    <property type="entry name" value="Nuc_sug_transp"/>
    <property type="match status" value="1"/>
</dbReference>
<dbReference type="PIRSF" id="PIRSF005799">
    <property type="entry name" value="UDP-gal_transpt"/>
    <property type="match status" value="1"/>
</dbReference>
<dbReference type="SUPFAM" id="SSF103481">
    <property type="entry name" value="Multidrug resistance efflux transporter EmrE"/>
    <property type="match status" value="1"/>
</dbReference>
<gene>
    <name evidence="2" type="primary">SLC35A4</name>
</gene>
<protein>
    <recommendedName>
        <fullName evidence="4">Probable UDP-sugar transporter protein SLC35A4</fullName>
    </recommendedName>
    <alternativeName>
        <fullName evidence="2">Solute carrier family 35 member A4</fullName>
    </alternativeName>
</protein>
<accession>Q5RA79</accession>
<organism>
    <name type="scientific">Pongo abelii</name>
    <name type="common">Sumatran orangutan</name>
    <name type="synonym">Pongo pygmaeus abelii</name>
    <dbReference type="NCBI Taxonomy" id="9601"/>
    <lineage>
        <taxon>Eukaryota</taxon>
        <taxon>Metazoa</taxon>
        <taxon>Chordata</taxon>
        <taxon>Craniata</taxon>
        <taxon>Vertebrata</taxon>
        <taxon>Euteleostomi</taxon>
        <taxon>Mammalia</taxon>
        <taxon>Eutheria</taxon>
        <taxon>Euarchontoglires</taxon>
        <taxon>Primates</taxon>
        <taxon>Haplorrhini</taxon>
        <taxon>Catarrhini</taxon>
        <taxon>Hominidae</taxon>
        <taxon>Pongo</taxon>
    </lineage>
</organism>